<protein>
    <recommendedName>
        <fullName>Putative stilbene synthase 2</fullName>
        <ecNumber>2.3.1.95</ecNumber>
    </recommendedName>
    <alternativeName>
        <fullName>Resveratrol synthase 2</fullName>
        <shortName>RS2</shortName>
    </alternativeName>
    <alternativeName>
        <fullName>Trihydroxystilbene synthase 2</fullName>
    </alternativeName>
</protein>
<evidence type="ECO:0000250" key="1"/>
<evidence type="ECO:0000255" key="2">
    <source>
        <dbReference type="PROSITE-ProRule" id="PRU10023"/>
    </source>
</evidence>
<evidence type="ECO:0000305" key="3"/>
<accession>P20077</accession>
<feature type="chain" id="PRO_0000216080" description="Putative stilbene synthase 2">
    <location>
        <begin position="1" status="less than"/>
        <end position="313"/>
    </location>
</feature>
<feature type="active site" evidence="2">
    <location>
        <position position="88"/>
    </location>
</feature>
<feature type="binding site" evidence="1">
    <location>
        <position position="191"/>
    </location>
    <ligand>
        <name>substrate</name>
    </ligand>
</feature>
<feature type="binding site" evidence="1">
    <location>
        <begin position="229"/>
        <end position="231"/>
    </location>
    <ligand>
        <name>substrate</name>
    </ligand>
</feature>
<feature type="non-terminal residue">
    <location>
        <position position="1"/>
    </location>
</feature>
<organism>
    <name type="scientific">Arachis hypogaea</name>
    <name type="common">Peanut</name>
    <dbReference type="NCBI Taxonomy" id="3818"/>
    <lineage>
        <taxon>Eukaryota</taxon>
        <taxon>Viridiplantae</taxon>
        <taxon>Streptophyta</taxon>
        <taxon>Embryophyta</taxon>
        <taxon>Tracheophyta</taxon>
        <taxon>Spermatophyta</taxon>
        <taxon>Magnoliopsida</taxon>
        <taxon>eudicotyledons</taxon>
        <taxon>Gunneridae</taxon>
        <taxon>Pentapetalae</taxon>
        <taxon>rosids</taxon>
        <taxon>fabids</taxon>
        <taxon>Fabales</taxon>
        <taxon>Fabaceae</taxon>
        <taxon>Papilionoideae</taxon>
        <taxon>50 kb inversion clade</taxon>
        <taxon>dalbergioids sensu lato</taxon>
        <taxon>Dalbergieae</taxon>
        <taxon>Pterocarpus clade</taxon>
        <taxon>Arachis</taxon>
    </lineage>
</organism>
<name>THS2_ARAHY</name>
<sequence length="313" mass="33968">LKENPNMCAYKAPSLDAREDMMIREVPRVGKEAATKAIKEWGQPMSKITHLIFCTTSGVALPGVDYELIVLLGLDPSVKRYMMYHQGCFAGGTVLRLAKDLAENNKDARVLIVCSENTAVTFRGPSETDMDSLVGQALFADGAAAIIIGSDPVPEVENPLFEIVSTDQKLVPNSHGAIGGLLREVGLTFYLNKSVPDIISQNINDALSKAFDPLGISDYNSIFWIAHPGGPAILDQVEQKVNLKPEKMNATRDVLSNYGNMSSACVFFIMDLMRKKSLEEGLKTTGEGLDWGVLFGFGPGLTIETVVLRSVAI</sequence>
<comment type="catalytic activity">
    <reaction>
        <text>4-coumaroyl-CoA + 3 malonyl-CoA + 3 H(+) = trans-resveratrol + 4 CO2 + 4 CoA</text>
        <dbReference type="Rhea" id="RHEA:11936"/>
        <dbReference type="ChEBI" id="CHEBI:15378"/>
        <dbReference type="ChEBI" id="CHEBI:16526"/>
        <dbReference type="ChEBI" id="CHEBI:45713"/>
        <dbReference type="ChEBI" id="CHEBI:57287"/>
        <dbReference type="ChEBI" id="CHEBI:57355"/>
        <dbReference type="ChEBI" id="CHEBI:57384"/>
        <dbReference type="EC" id="2.3.1.95"/>
    </reaction>
</comment>
<comment type="pathway">
    <text>Phytoalexin biosynthesis; 3,4',5-trihydroxystilbene biosynthesis; 3,4',5-trihydroxystilbene from trans-4-coumarate: step 2/2.</text>
</comment>
<comment type="subunit">
    <text>Homodimer.</text>
</comment>
<comment type="subcellular location">
    <subcellularLocation>
        <location>Cytoplasm</location>
    </subcellularLocation>
</comment>
<comment type="similarity">
    <text evidence="3">Belongs to the thiolase-like superfamily. Chalcone/stilbene synthases family.</text>
</comment>
<comment type="caution">
    <text evidence="3">Could be the product of a pseudogene. As no transcript has been detected so far, this sequence could come from an incomplete and non functional gene.</text>
</comment>
<keyword id="KW-0012">Acyltransferase</keyword>
<keyword id="KW-0963">Cytoplasm</keyword>
<keyword id="KW-0808">Transferase</keyword>
<proteinExistence type="uncertain"/>
<dbReference type="EC" id="2.3.1.95"/>
<dbReference type="EMBL" id="X62300">
    <property type="protein sequence ID" value="CAA44186.1"/>
    <property type="status" value="ALT_SEQ"/>
    <property type="molecule type" value="mRNA"/>
</dbReference>
<dbReference type="PIR" id="S09062">
    <property type="entry name" value="SYNPHS"/>
</dbReference>
<dbReference type="SMR" id="P20077"/>
<dbReference type="UniPathway" id="UPA00372">
    <property type="reaction ID" value="UER00548"/>
</dbReference>
<dbReference type="GO" id="GO:0005737">
    <property type="term" value="C:cytoplasm"/>
    <property type="evidence" value="ECO:0007669"/>
    <property type="project" value="UniProtKB-SubCell"/>
</dbReference>
<dbReference type="GO" id="GO:0050350">
    <property type="term" value="F:trihydroxystilbene synthase activity"/>
    <property type="evidence" value="ECO:0007669"/>
    <property type="project" value="UniProtKB-EC"/>
</dbReference>
<dbReference type="GO" id="GO:0030639">
    <property type="term" value="P:polyketide biosynthetic process"/>
    <property type="evidence" value="ECO:0007669"/>
    <property type="project" value="TreeGrafter"/>
</dbReference>
<dbReference type="CDD" id="cd00831">
    <property type="entry name" value="CHS_like"/>
    <property type="match status" value="1"/>
</dbReference>
<dbReference type="FunFam" id="3.40.47.10:FF:000014">
    <property type="entry name" value="Chalcone synthase 1"/>
    <property type="match status" value="1"/>
</dbReference>
<dbReference type="FunFam" id="3.40.47.10:FF:000025">
    <property type="entry name" value="Chalcone synthase 2"/>
    <property type="match status" value="1"/>
</dbReference>
<dbReference type="Gene3D" id="3.40.47.10">
    <property type="match status" value="2"/>
</dbReference>
<dbReference type="InterPro" id="IPR012328">
    <property type="entry name" value="Chalcone/stilbene_synt_C"/>
</dbReference>
<dbReference type="InterPro" id="IPR001099">
    <property type="entry name" value="Chalcone/stilbene_synt_N"/>
</dbReference>
<dbReference type="InterPro" id="IPR018088">
    <property type="entry name" value="Chalcone/stilbene_synthase_AS"/>
</dbReference>
<dbReference type="InterPro" id="IPR011141">
    <property type="entry name" value="Polyketide_synthase_type-III"/>
</dbReference>
<dbReference type="InterPro" id="IPR016039">
    <property type="entry name" value="Thiolase-like"/>
</dbReference>
<dbReference type="PANTHER" id="PTHR11877:SF62">
    <property type="entry name" value="CHALCONE SYNTHASE 7"/>
    <property type="match status" value="1"/>
</dbReference>
<dbReference type="PANTHER" id="PTHR11877">
    <property type="entry name" value="HYDROXYMETHYLGLUTARYL-COA SYNTHASE"/>
    <property type="match status" value="1"/>
</dbReference>
<dbReference type="Pfam" id="PF02797">
    <property type="entry name" value="Chal_sti_synt_C"/>
    <property type="match status" value="1"/>
</dbReference>
<dbReference type="Pfam" id="PF00195">
    <property type="entry name" value="Chal_sti_synt_N"/>
    <property type="match status" value="1"/>
</dbReference>
<dbReference type="SUPFAM" id="SSF53901">
    <property type="entry name" value="Thiolase-like"/>
    <property type="match status" value="1"/>
</dbReference>
<dbReference type="PROSITE" id="PS00441">
    <property type="entry name" value="CHALCONE_SYNTH"/>
    <property type="match status" value="1"/>
</dbReference>
<reference key="1">
    <citation type="journal article" date="1988" name="Eur. J. Biochem.">
        <title>Molecular analysis of resveratrol synthase. cDNA, genomic clones and relationship with chalcone synthase.</title>
        <authorList>
            <person name="Schroeder G."/>
            <person name="Brown J.W.S."/>
            <person name="Schroeder J."/>
        </authorList>
    </citation>
    <scope>NUCLEOTIDE SEQUENCE [MRNA]</scope>
</reference>